<keyword id="KW-0119">Carbohydrate metabolism</keyword>
<keyword id="KW-0328">Glycosyltransferase</keyword>
<keyword id="KW-1185">Reference proteome</keyword>
<keyword id="KW-0808">Transferase</keyword>
<proteinExistence type="inferred from homology"/>
<feature type="chain" id="PRO_0000184576" description="4-alpha-glucanotransferase">
    <location>
        <begin position="1"/>
        <end position="653"/>
    </location>
</feature>
<feature type="active site" description="Nucleophile" evidence="1">
    <location>
        <position position="123"/>
    </location>
</feature>
<feature type="active site" description="Proton donor" evidence="1">
    <location>
        <position position="214"/>
    </location>
</feature>
<comment type="catalytic activity">
    <reaction>
        <text>Transfers a segment of a (1-&gt;4)-alpha-D-glucan to a new position in an acceptor, which may be glucose or a (1-&gt;4)-alpha-D-glucan.</text>
        <dbReference type="EC" id="2.4.1.25"/>
    </reaction>
</comment>
<comment type="similarity">
    <text evidence="2">Belongs to the glycosyl hydrolase 57 family.</text>
</comment>
<accession>O32450</accession>
<evidence type="ECO:0000250" key="1"/>
<evidence type="ECO:0000305" key="2"/>
<reference key="1">
    <citation type="journal article" date="1997" name="J. Ferment. Bioeng.">
        <title>Cloning and expression of the 4-alpha-glucanotransferase gene from the hyperthermophilic archaeon Pyrococcus sp. KOD1, and characterization of the enzyme.</title>
        <authorList>
            <person name="Tachibana Y."/>
            <person name="Fujiwara S."/>
            <person name="Takagi M."/>
            <person name="Imanaka T."/>
        </authorList>
    </citation>
    <scope>NUCLEOTIDE SEQUENCE [GENOMIC DNA]</scope>
    <source>
        <strain>ATCC BAA-918 / JCM 12380 / KOD1</strain>
    </source>
</reference>
<reference key="2">
    <citation type="journal article" date="2005" name="Genome Res.">
        <title>Complete genome sequence of the hyperthermophilic archaeon Thermococcus kodakaraensis KOD1 and comparison with Pyrococcus genomes.</title>
        <authorList>
            <person name="Fukui T."/>
            <person name="Atomi H."/>
            <person name="Kanai T."/>
            <person name="Matsumi R."/>
            <person name="Fujiwara S."/>
            <person name="Imanaka T."/>
        </authorList>
    </citation>
    <scope>NUCLEOTIDE SEQUENCE [LARGE SCALE GENOMIC DNA]</scope>
    <source>
        <strain>ATCC BAA-918 / JCM 12380 / KOD1</strain>
    </source>
</reference>
<gene>
    <name type="ordered locus">TK1809</name>
</gene>
<dbReference type="EC" id="2.4.1.25"/>
<dbReference type="EMBL" id="D87907">
    <property type="protein sequence ID" value="BAA22062.1"/>
    <property type="molecule type" value="Genomic_DNA"/>
</dbReference>
<dbReference type="EMBL" id="AP006878">
    <property type="protein sequence ID" value="BAD85998.1"/>
    <property type="molecule type" value="Genomic_DNA"/>
</dbReference>
<dbReference type="RefSeq" id="WP_011250760.1">
    <property type="nucleotide sequence ID" value="NC_006624.1"/>
</dbReference>
<dbReference type="SMR" id="O32450"/>
<dbReference type="STRING" id="69014.TK1809"/>
<dbReference type="CAZy" id="GH57">
    <property type="family name" value="Glycoside Hydrolase Family 57"/>
</dbReference>
<dbReference type="EnsemblBacteria" id="BAD85998">
    <property type="protein sequence ID" value="BAD85998"/>
    <property type="gene ID" value="TK1809"/>
</dbReference>
<dbReference type="GeneID" id="78448340"/>
<dbReference type="KEGG" id="tko:TK1809"/>
<dbReference type="PATRIC" id="fig|69014.16.peg.1765"/>
<dbReference type="eggNOG" id="arCOG03280">
    <property type="taxonomic scope" value="Archaea"/>
</dbReference>
<dbReference type="HOGENOM" id="CLU_026700_0_0_2"/>
<dbReference type="InParanoid" id="O32450"/>
<dbReference type="OrthoDB" id="18576at2157"/>
<dbReference type="PhylomeDB" id="O32450"/>
<dbReference type="Proteomes" id="UP000000536">
    <property type="component" value="Chromosome"/>
</dbReference>
<dbReference type="GO" id="GO:0004134">
    <property type="term" value="F:4-alpha-glucanotransferase activity"/>
    <property type="evidence" value="ECO:0007669"/>
    <property type="project" value="UniProtKB-EC"/>
</dbReference>
<dbReference type="GO" id="GO:0030246">
    <property type="term" value="F:carbohydrate binding"/>
    <property type="evidence" value="ECO:0007669"/>
    <property type="project" value="InterPro"/>
</dbReference>
<dbReference type="GO" id="GO:0005975">
    <property type="term" value="P:carbohydrate metabolic process"/>
    <property type="evidence" value="ECO:0007669"/>
    <property type="project" value="InterPro"/>
</dbReference>
<dbReference type="CDD" id="cd10793">
    <property type="entry name" value="GH57N_TLGT_like"/>
    <property type="match status" value="1"/>
</dbReference>
<dbReference type="Gene3D" id="2.70.98.10">
    <property type="match status" value="1"/>
</dbReference>
<dbReference type="Gene3D" id="3.20.110.20">
    <property type="match status" value="1"/>
</dbReference>
<dbReference type="InterPro" id="IPR015179">
    <property type="entry name" value="A-amylase/a-glucTrfase_C"/>
</dbReference>
<dbReference type="InterPro" id="IPR015178">
    <property type="entry name" value="A-amylase/a-glucTrfase_central"/>
</dbReference>
<dbReference type="InterPro" id="IPR011013">
    <property type="entry name" value="Gal_mutarotase_sf_dom"/>
</dbReference>
<dbReference type="InterPro" id="IPR014718">
    <property type="entry name" value="GH-type_carb-bd"/>
</dbReference>
<dbReference type="InterPro" id="IPR052046">
    <property type="entry name" value="GH57_Enzymes"/>
</dbReference>
<dbReference type="InterPro" id="IPR011330">
    <property type="entry name" value="Glyco_hydro/deAcase_b/a-brl"/>
</dbReference>
<dbReference type="InterPro" id="IPR028995">
    <property type="entry name" value="Glyco_hydro_57/38_cen_sf"/>
</dbReference>
<dbReference type="InterPro" id="IPR004300">
    <property type="entry name" value="Glyco_hydro_57_N"/>
</dbReference>
<dbReference type="PANTHER" id="PTHR36306:SF1">
    <property type="entry name" value="ALPHA-AMYLASE-RELATED"/>
    <property type="match status" value="1"/>
</dbReference>
<dbReference type="PANTHER" id="PTHR36306">
    <property type="entry name" value="ALPHA-AMYLASE-RELATED-RELATED"/>
    <property type="match status" value="1"/>
</dbReference>
<dbReference type="Pfam" id="PF09094">
    <property type="entry name" value="AmyA-A_glucT_m"/>
    <property type="match status" value="1"/>
</dbReference>
<dbReference type="Pfam" id="PF09095">
    <property type="entry name" value="AmyA-gluTrfs_C"/>
    <property type="match status" value="1"/>
</dbReference>
<dbReference type="Pfam" id="PF03065">
    <property type="entry name" value="Glyco_hydro_57"/>
    <property type="match status" value="1"/>
</dbReference>
<dbReference type="SUPFAM" id="SSF88688">
    <property type="entry name" value="Families 57/38 glycoside transferase middle domain"/>
    <property type="match status" value="1"/>
</dbReference>
<dbReference type="SUPFAM" id="SSF74650">
    <property type="entry name" value="Galactose mutarotase-like"/>
    <property type="match status" value="1"/>
</dbReference>
<dbReference type="SUPFAM" id="SSF88713">
    <property type="entry name" value="Glycoside hydrolase/deacetylase"/>
    <property type="match status" value="1"/>
</dbReference>
<protein>
    <recommendedName>
        <fullName>4-alpha-glucanotransferase</fullName>
        <ecNumber>2.4.1.25</ecNumber>
    </recommendedName>
    <alternativeName>
        <fullName>Amylomaltase</fullName>
    </alternativeName>
    <alternativeName>
        <fullName>Disproportionating enzyme</fullName>
        <shortName>D-enzyme</shortName>
    </alternativeName>
</protein>
<name>MALQ_THEKO</name>
<organism>
    <name type="scientific">Thermococcus kodakarensis (strain ATCC BAA-918 / JCM 12380 / KOD1)</name>
    <name type="common">Pyrococcus kodakaraensis (strain KOD1)</name>
    <dbReference type="NCBI Taxonomy" id="69014"/>
    <lineage>
        <taxon>Archaea</taxon>
        <taxon>Methanobacteriati</taxon>
        <taxon>Methanobacteriota</taxon>
        <taxon>Thermococci</taxon>
        <taxon>Thermococcales</taxon>
        <taxon>Thermococcaceae</taxon>
        <taxon>Thermococcus</taxon>
    </lineage>
</organism>
<sequence length="653" mass="76665">MEMVNFIFGIHNHQPLGNFGWVMESAYERSYRPFMETLEEYPNMKVAVHYSGPLLEWIRDNKPEHLDLLRSLVKRGQLEIVVAGFYEPVLASIPKEDRIVQIEKLKEFARNLGYEARGVWLTERVWQPELVKSLRAAGIDYVIVDDYHFMSAGLSKDELFWPYYTEDGGEVITVFPIDEKLRYLIPFRPVDKTLEYLHSLDDGDESKVAVFHDDGEKFGVWPGTYEWVYEKGWLREFFDRVSSDERINLMLYSEYLQRFRPRGLVYLPIASYFEMSEWSLPARQAKLFVEFVEELKKENKFDRYRVFVRGGIWKNFFFKYPESNYMHKRMLMVSKAVRNNPEAREFILRAQCNDAYWHGVFGGVYLPHLRRAVWENIIKAQSHVKTGNFVRDIDFDGRDEVFIENENFYAVFKPAYGGALFELSSKRKAVNYNDVLARRWEHYHEVPEAATPEEGGEGVASIHELGKQIPDEIRRELAYDSHLRAILQDHFLEPETTLDEYRLSRYIELGDFLTGAYNFSLIENGITLERDGSVAKRPARVEKSVRLTEDGFIVDYTVRSDARALFGVELNLAVHSVMEEPAEFEAEKFEVNDPYGIGKVEIELDRRAKVWKYPIKTLSQSESGWDFIQQGVSYTVLFPVEGELRFRLRFREL</sequence>